<sequence length="201" mass="22277">MGSRKCGGCLSCLLIPLALWSIIVNILLYFPNGQTSYASSNKLTNYVWYFEGICFSGIMMLIVTTVLLVLENNNNYKCCQSENCSKKYVTLLSIIFSSLGIAFSGYCLVISALGLVQGPYCRTLDGWEYAFEGTAGRFLTDSSIWIQCLEPAHVVEWNIILFSILITLSGLQVIICLIRVVMQLSKILCGSYSVIFQPGII</sequence>
<proteinExistence type="evidence at protein level"/>
<feature type="chain" id="PRO_0000219304" description="Transmembrane 4 L6 family member 18">
    <location>
        <begin position="1"/>
        <end position="201"/>
    </location>
</feature>
<feature type="topological domain" description="Cytoplasmic" evidence="1">
    <location>
        <begin position="1"/>
        <end position="9"/>
    </location>
</feature>
<feature type="transmembrane region" description="Helical" evidence="1">
    <location>
        <begin position="10"/>
        <end position="30"/>
    </location>
</feature>
<feature type="topological domain" description="Extracellular" evidence="1">
    <location>
        <begin position="31"/>
        <end position="49"/>
    </location>
</feature>
<feature type="transmembrane region" description="Helical" evidence="1">
    <location>
        <begin position="50"/>
        <end position="70"/>
    </location>
</feature>
<feature type="topological domain" description="Cytoplasmic" evidence="1">
    <location>
        <begin position="71"/>
        <end position="93"/>
    </location>
</feature>
<feature type="transmembrane region" description="Helical" evidence="1">
    <location>
        <begin position="94"/>
        <end position="114"/>
    </location>
</feature>
<feature type="topological domain" description="Extracellular" evidence="1">
    <location>
        <begin position="115"/>
        <end position="157"/>
    </location>
</feature>
<feature type="transmembrane region" description="Helical" evidence="1">
    <location>
        <begin position="158"/>
        <end position="178"/>
    </location>
</feature>
<feature type="topological domain" description="Cytoplasmic" evidence="1">
    <location>
        <begin position="179"/>
        <end position="201"/>
    </location>
</feature>
<comment type="interaction">
    <interactant intactId="EBI-13351685">
        <id>Q96CE8</id>
    </interactant>
    <interactant intactId="EBI-749464">
        <id>Q12983</id>
        <label>BNIP3</label>
    </interactant>
    <organismsDiffer>false</organismsDiffer>
    <experiments>3</experiments>
</comment>
<comment type="interaction">
    <interactant intactId="EBI-13351685">
        <id>Q96CE8</id>
    </interactant>
    <interactant intactId="EBI-12256978">
        <id>Q8N6F1-2</id>
        <label>CLDN19</label>
    </interactant>
    <organismsDiffer>false</organismsDiffer>
    <experiments>3</experiments>
</comment>
<comment type="interaction">
    <interactant intactId="EBI-13351685">
        <id>Q96CE8</id>
    </interactant>
    <interactant intactId="EBI-11749983">
        <id>Q9UHP7-3</id>
        <label>CLEC2D</label>
    </interactant>
    <organismsDiffer>false</organismsDiffer>
    <experiments>3</experiments>
</comment>
<comment type="interaction">
    <interactant intactId="EBI-13351685">
        <id>Q96CE8</id>
    </interactant>
    <interactant intactId="EBI-3911467">
        <id>Q07325</id>
        <label>CXCL9</label>
    </interactant>
    <organismsDiffer>false</organismsDiffer>
    <experiments>3</experiments>
</comment>
<comment type="interaction">
    <interactant intactId="EBI-13351685">
        <id>Q96CE8</id>
    </interactant>
    <interactant intactId="EBI-8646596">
        <id>P49447</id>
        <label>CYB561</label>
    </interactant>
    <organismsDiffer>false</organismsDiffer>
    <experiments>3</experiments>
</comment>
<comment type="interaction">
    <interactant intactId="EBI-13351685">
        <id>Q96CE8</id>
    </interactant>
    <interactant intactId="EBI-10269179">
        <id>Q8NBI2</id>
        <label>CYB561A3</label>
    </interactant>
    <organismsDiffer>false</organismsDiffer>
    <experiments>3</experiments>
</comment>
<comment type="interaction">
    <interactant intactId="EBI-13351685">
        <id>Q96CE8</id>
    </interactant>
    <interactant intactId="EBI-1753674">
        <id>P52803</id>
        <label>EFNA5</label>
    </interactant>
    <organismsDiffer>false</organismsDiffer>
    <experiments>3</experiments>
</comment>
<comment type="interaction">
    <interactant intactId="EBI-13351685">
        <id>Q96CE8</id>
    </interactant>
    <interactant intactId="EBI-3907816">
        <id>P54852</id>
        <label>EMP3</label>
    </interactant>
    <organismsDiffer>false</organismsDiffer>
    <experiments>3</experiments>
</comment>
<comment type="interaction">
    <interactant intactId="EBI-13351685">
        <id>Q96CE8</id>
    </interactant>
    <interactant intactId="EBI-2876774">
        <id>Q92520</id>
        <label>FAM3C</label>
    </interactant>
    <organismsDiffer>false</organismsDiffer>
    <experiments>3</experiments>
</comment>
<comment type="interaction">
    <interactant intactId="EBI-13351685">
        <id>Q96CE8</id>
    </interactant>
    <interactant intactId="EBI-713304">
        <id>Q9H0Q3</id>
        <label>FXYD6</label>
    </interactant>
    <organismsDiffer>false</organismsDiffer>
    <experiments>3</experiments>
</comment>
<comment type="interaction">
    <interactant intactId="EBI-13351685">
        <id>Q96CE8</id>
    </interactant>
    <interactant intactId="EBI-6166686">
        <id>Q96F15</id>
        <label>GIMAP5</label>
    </interactant>
    <organismsDiffer>false</organismsDiffer>
    <experiments>3</experiments>
</comment>
<comment type="interaction">
    <interactant intactId="EBI-13351685">
        <id>Q96CE8</id>
    </interactant>
    <interactant intactId="EBI-725665">
        <id>Q9Y5U9</id>
        <label>IER3IP1</label>
    </interactant>
    <organismsDiffer>false</organismsDiffer>
    <experiments>3</experiments>
</comment>
<comment type="interaction">
    <interactant intactId="EBI-13351685">
        <id>Q96CE8</id>
    </interactant>
    <interactant intactId="EBI-300173">
        <id>P05107</id>
        <label>ITGB2</label>
    </interactant>
    <organismsDiffer>false</organismsDiffer>
    <experiments>3</experiments>
</comment>
<comment type="interaction">
    <interactant intactId="EBI-13351685">
        <id>Q96CE8</id>
    </interactant>
    <interactant intactId="EBI-8070286">
        <id>O43561-2</id>
        <label>LAT</label>
    </interactant>
    <organismsDiffer>false</organismsDiffer>
    <experiments>3</experiments>
</comment>
<comment type="interaction">
    <interactant intactId="EBI-13351685">
        <id>Q96CE8</id>
    </interactant>
    <interactant intactId="EBI-2820517">
        <id>Q8TAF8</id>
        <label>LHFPL5</label>
    </interactant>
    <organismsDiffer>false</organismsDiffer>
    <experiments>3</experiments>
</comment>
<comment type="interaction">
    <interactant intactId="EBI-13351685">
        <id>Q96CE8</id>
    </interactant>
    <interactant intactId="EBI-3932027">
        <id>P21145</id>
        <label>MAL</label>
    </interactant>
    <organismsDiffer>false</organismsDiffer>
    <experiments>3</experiments>
</comment>
<comment type="interaction">
    <interactant intactId="EBI-13351685">
        <id>Q96CE8</id>
    </interactant>
    <interactant intactId="EBI-8449636">
        <id>P30301</id>
        <label>MIP</label>
    </interactant>
    <organismsDiffer>false</organismsDiffer>
    <experiments>3</experiments>
</comment>
<comment type="interaction">
    <interactant intactId="EBI-13351685">
        <id>Q96CE8</id>
    </interactant>
    <interactant intactId="EBI-12070086">
        <id>Q5J8X5</id>
        <label>MS4A13</label>
    </interactant>
    <organismsDiffer>false</organismsDiffer>
    <experiments>3</experiments>
</comment>
<comment type="interaction">
    <interactant intactId="EBI-13351685">
        <id>Q96CE8</id>
    </interactant>
    <interactant intactId="EBI-12806656">
        <id>Q96HJ5</id>
        <label>MS4A3</label>
    </interactant>
    <organismsDiffer>false</organismsDiffer>
    <experiments>3</experiments>
</comment>
<comment type="interaction">
    <interactant intactId="EBI-13351685">
        <id>Q96CE8</id>
    </interactant>
    <interactant intactId="EBI-9550165">
        <id>Q0D2K0</id>
        <label>NIPAL4</label>
    </interactant>
    <organismsDiffer>false</organismsDiffer>
    <experiments>3</experiments>
</comment>
<comment type="interaction">
    <interactant intactId="EBI-13351685">
        <id>Q96CE8</id>
    </interactant>
    <interactant intactId="EBI-6380741">
        <id>P42857</id>
        <label>NSG1</label>
    </interactant>
    <organismsDiffer>false</organismsDiffer>
    <experiments>3</experiments>
</comment>
<comment type="interaction">
    <interactant intactId="EBI-13351685">
        <id>Q96CE8</id>
    </interactant>
    <interactant intactId="EBI-2845982">
        <id>Q01453</id>
        <label>PMP22</label>
    </interactant>
    <organismsDiffer>false</organismsDiffer>
    <experiments>3</experiments>
</comment>
<comment type="interaction">
    <interactant intactId="EBI-13351685">
        <id>Q96CE8</id>
    </interactant>
    <interactant intactId="EBI-1052363">
        <id>Q9NS64</id>
        <label>RPRM</label>
    </interactant>
    <organismsDiffer>false</organismsDiffer>
    <experiments>3</experiments>
</comment>
<comment type="interaction">
    <interactant intactId="EBI-13351685">
        <id>Q96CE8</id>
    </interactant>
    <interactant intactId="EBI-749270">
        <id>Q8N6R1</id>
        <label>SERP2</label>
    </interactant>
    <organismsDiffer>false</organismsDiffer>
    <experiments>3</experiments>
</comment>
<comment type="interaction">
    <interactant intactId="EBI-13351685">
        <id>Q96CE8</id>
    </interactant>
    <interactant intactId="EBI-8644112">
        <id>Q9BRI3</id>
        <label>SLC30A2</label>
    </interactant>
    <organismsDiffer>false</organismsDiffer>
    <experiments>3</experiments>
</comment>
<comment type="interaction">
    <interactant intactId="EBI-13351685">
        <id>Q96CE8</id>
    </interactant>
    <interactant intactId="EBI-2823239">
        <id>Q9NUM3</id>
        <label>SLC39A9</label>
    </interactant>
    <organismsDiffer>false</organismsDiffer>
    <experiments>3</experiments>
</comment>
<comment type="interaction">
    <interactant intactId="EBI-13351685">
        <id>Q96CE8</id>
    </interactant>
    <interactant intactId="EBI-741850">
        <id>Q9BZL3</id>
        <label>SMIM3</label>
    </interactant>
    <organismsDiffer>false</organismsDiffer>
    <experiments>3</experiments>
</comment>
<comment type="interaction">
    <interactant intactId="EBI-13351685">
        <id>Q96CE8</id>
    </interactant>
    <interactant intactId="EBI-12200293">
        <id>P0DN84</id>
        <label>STRIT1</label>
    </interactant>
    <organismsDiffer>false</organismsDiffer>
    <experiments>3</experiments>
</comment>
<comment type="interaction">
    <interactant intactId="EBI-13351685">
        <id>Q96CE8</id>
    </interactant>
    <interactant intactId="EBI-10329860">
        <id>Q9Y6I9</id>
        <label>TEX264</label>
    </interactant>
    <organismsDiffer>false</organismsDiffer>
    <experiments>3</experiments>
</comment>
<comment type="interaction">
    <interactant intactId="EBI-13351685">
        <id>Q96CE8</id>
    </interactant>
    <interactant intactId="EBI-10173151">
        <id>A2RU14</id>
        <label>TMEM218</label>
    </interactant>
    <organismsDiffer>false</organismsDiffer>
    <experiments>3</experiments>
</comment>
<comment type="interaction">
    <interactant intactId="EBI-13351685">
        <id>Q96CE8</id>
    </interactant>
    <interactant intactId="EBI-16746122">
        <id>Q9NSU2-1</id>
        <label>TREX1</label>
    </interactant>
    <organismsDiffer>false</organismsDiffer>
    <experiments>3</experiments>
</comment>
<comment type="interaction">
    <interactant intactId="EBI-13351685">
        <id>Q96CE8</id>
    </interactant>
    <interactant intactId="EBI-11988865">
        <id>A5PKU2</id>
        <label>TUSC5</label>
    </interactant>
    <organismsDiffer>false</organismsDiffer>
    <experiments>3</experiments>
</comment>
<comment type="interaction">
    <interactant intactId="EBI-13351685">
        <id>Q96CE8</id>
    </interactant>
    <interactant intactId="EBI-988826">
        <id>Q9Y385</id>
        <label>UBE2J1</label>
    </interactant>
    <organismsDiffer>false</organismsDiffer>
    <experiments>3</experiments>
</comment>
<comment type="interaction">
    <interactant intactId="EBI-13351685">
        <id>Q96CE8</id>
    </interactant>
    <interactant intactId="EBI-4401271">
        <id>Q9H1C4</id>
        <label>UNC93B1</label>
    </interactant>
    <organismsDiffer>false</organismsDiffer>
    <experiments>3</experiments>
</comment>
<comment type="interaction">
    <interactant intactId="EBI-13351685">
        <id>Q96CE8</id>
    </interactant>
    <interactant intactId="EBI-10191195">
        <id>O95183</id>
        <label>VAMP5</label>
    </interactant>
    <organismsDiffer>false</organismsDiffer>
    <experiments>3</experiments>
</comment>
<comment type="subcellular location">
    <subcellularLocation>
        <location evidence="2">Membrane</location>
        <topology evidence="2">Multi-pass membrane protein</topology>
    </subcellularLocation>
</comment>
<comment type="similarity">
    <text evidence="2">Belongs to the L6 tetraspanin family.</text>
</comment>
<accession>Q96CE8</accession>
<accession>B2R8K0</accession>
<accession>D3DNH5</accession>
<gene>
    <name type="primary">TM4SF18</name>
</gene>
<reference key="1">
    <citation type="journal article" date="2004" name="Nat. Genet.">
        <title>Complete sequencing and characterization of 21,243 full-length human cDNAs.</title>
        <authorList>
            <person name="Ota T."/>
            <person name="Suzuki Y."/>
            <person name="Nishikawa T."/>
            <person name="Otsuki T."/>
            <person name="Sugiyama T."/>
            <person name="Irie R."/>
            <person name="Wakamatsu A."/>
            <person name="Hayashi K."/>
            <person name="Sato H."/>
            <person name="Nagai K."/>
            <person name="Kimura K."/>
            <person name="Makita H."/>
            <person name="Sekine M."/>
            <person name="Obayashi M."/>
            <person name="Nishi T."/>
            <person name="Shibahara T."/>
            <person name="Tanaka T."/>
            <person name="Ishii S."/>
            <person name="Yamamoto J."/>
            <person name="Saito K."/>
            <person name="Kawai Y."/>
            <person name="Isono Y."/>
            <person name="Nakamura Y."/>
            <person name="Nagahari K."/>
            <person name="Murakami K."/>
            <person name="Yasuda T."/>
            <person name="Iwayanagi T."/>
            <person name="Wagatsuma M."/>
            <person name="Shiratori A."/>
            <person name="Sudo H."/>
            <person name="Hosoiri T."/>
            <person name="Kaku Y."/>
            <person name="Kodaira H."/>
            <person name="Kondo H."/>
            <person name="Sugawara M."/>
            <person name="Takahashi M."/>
            <person name="Kanda K."/>
            <person name="Yokoi T."/>
            <person name="Furuya T."/>
            <person name="Kikkawa E."/>
            <person name="Omura Y."/>
            <person name="Abe K."/>
            <person name="Kamihara K."/>
            <person name="Katsuta N."/>
            <person name="Sato K."/>
            <person name="Tanikawa M."/>
            <person name="Yamazaki M."/>
            <person name="Ninomiya K."/>
            <person name="Ishibashi T."/>
            <person name="Yamashita H."/>
            <person name="Murakawa K."/>
            <person name="Fujimori K."/>
            <person name="Tanai H."/>
            <person name="Kimata M."/>
            <person name="Watanabe M."/>
            <person name="Hiraoka S."/>
            <person name="Chiba Y."/>
            <person name="Ishida S."/>
            <person name="Ono Y."/>
            <person name="Takiguchi S."/>
            <person name="Watanabe S."/>
            <person name="Yosida M."/>
            <person name="Hotuta T."/>
            <person name="Kusano J."/>
            <person name="Kanehori K."/>
            <person name="Takahashi-Fujii A."/>
            <person name="Hara H."/>
            <person name="Tanase T.-O."/>
            <person name="Nomura Y."/>
            <person name="Togiya S."/>
            <person name="Komai F."/>
            <person name="Hara R."/>
            <person name="Takeuchi K."/>
            <person name="Arita M."/>
            <person name="Imose N."/>
            <person name="Musashino K."/>
            <person name="Yuuki H."/>
            <person name="Oshima A."/>
            <person name="Sasaki N."/>
            <person name="Aotsuka S."/>
            <person name="Yoshikawa Y."/>
            <person name="Matsunawa H."/>
            <person name="Ichihara T."/>
            <person name="Shiohata N."/>
            <person name="Sano S."/>
            <person name="Moriya S."/>
            <person name="Momiyama H."/>
            <person name="Satoh N."/>
            <person name="Takami S."/>
            <person name="Terashima Y."/>
            <person name="Suzuki O."/>
            <person name="Nakagawa S."/>
            <person name="Senoh A."/>
            <person name="Mizoguchi H."/>
            <person name="Goto Y."/>
            <person name="Shimizu F."/>
            <person name="Wakebe H."/>
            <person name="Hishigaki H."/>
            <person name="Watanabe T."/>
            <person name="Sugiyama A."/>
            <person name="Takemoto M."/>
            <person name="Kawakami B."/>
            <person name="Yamazaki M."/>
            <person name="Watanabe K."/>
            <person name="Kumagai A."/>
            <person name="Itakura S."/>
            <person name="Fukuzumi Y."/>
            <person name="Fujimori Y."/>
            <person name="Komiyama M."/>
            <person name="Tashiro H."/>
            <person name="Tanigami A."/>
            <person name="Fujiwara T."/>
            <person name="Ono T."/>
            <person name="Yamada K."/>
            <person name="Fujii Y."/>
            <person name="Ozaki K."/>
            <person name="Hirao M."/>
            <person name="Ohmori Y."/>
            <person name="Kawabata A."/>
            <person name="Hikiji T."/>
            <person name="Kobatake N."/>
            <person name="Inagaki H."/>
            <person name="Ikema Y."/>
            <person name="Okamoto S."/>
            <person name="Okitani R."/>
            <person name="Kawakami T."/>
            <person name="Noguchi S."/>
            <person name="Itoh T."/>
            <person name="Shigeta K."/>
            <person name="Senba T."/>
            <person name="Matsumura K."/>
            <person name="Nakajima Y."/>
            <person name="Mizuno T."/>
            <person name="Morinaga M."/>
            <person name="Sasaki M."/>
            <person name="Togashi T."/>
            <person name="Oyama M."/>
            <person name="Hata H."/>
            <person name="Watanabe M."/>
            <person name="Komatsu T."/>
            <person name="Mizushima-Sugano J."/>
            <person name="Satoh T."/>
            <person name="Shirai Y."/>
            <person name="Takahashi Y."/>
            <person name="Nakagawa K."/>
            <person name="Okumura K."/>
            <person name="Nagase T."/>
            <person name="Nomura N."/>
            <person name="Kikuchi H."/>
            <person name="Masuho Y."/>
            <person name="Yamashita R."/>
            <person name="Nakai K."/>
            <person name="Yada T."/>
            <person name="Nakamura Y."/>
            <person name="Ohara O."/>
            <person name="Isogai T."/>
            <person name="Sugano S."/>
        </authorList>
    </citation>
    <scope>NUCLEOTIDE SEQUENCE [LARGE SCALE MRNA]</scope>
    <source>
        <tissue>Trachea</tissue>
    </source>
</reference>
<reference key="2">
    <citation type="submission" date="2005-09" db="EMBL/GenBank/DDBJ databases">
        <authorList>
            <person name="Mural R.J."/>
            <person name="Istrail S."/>
            <person name="Sutton G.G."/>
            <person name="Florea L."/>
            <person name="Halpern A.L."/>
            <person name="Mobarry C.M."/>
            <person name="Lippert R."/>
            <person name="Walenz B."/>
            <person name="Shatkay H."/>
            <person name="Dew I."/>
            <person name="Miller J.R."/>
            <person name="Flanigan M.J."/>
            <person name="Edwards N.J."/>
            <person name="Bolanos R."/>
            <person name="Fasulo D."/>
            <person name="Halldorsson B.V."/>
            <person name="Hannenhalli S."/>
            <person name="Turner R."/>
            <person name="Yooseph S."/>
            <person name="Lu F."/>
            <person name="Nusskern D.R."/>
            <person name="Shue B.C."/>
            <person name="Zheng X.H."/>
            <person name="Zhong F."/>
            <person name="Delcher A.L."/>
            <person name="Huson D.H."/>
            <person name="Kravitz S.A."/>
            <person name="Mouchard L."/>
            <person name="Reinert K."/>
            <person name="Remington K.A."/>
            <person name="Clark A.G."/>
            <person name="Waterman M.S."/>
            <person name="Eichler E.E."/>
            <person name="Adams M.D."/>
            <person name="Hunkapiller M.W."/>
            <person name="Myers E.W."/>
            <person name="Venter J.C."/>
        </authorList>
    </citation>
    <scope>NUCLEOTIDE SEQUENCE [LARGE SCALE GENOMIC DNA]</scope>
</reference>
<reference key="3">
    <citation type="journal article" date="2004" name="Genome Res.">
        <title>The status, quality, and expansion of the NIH full-length cDNA project: the Mammalian Gene Collection (MGC).</title>
        <authorList>
            <consortium name="The MGC Project Team"/>
        </authorList>
    </citation>
    <scope>NUCLEOTIDE SEQUENCE [LARGE SCALE MRNA]</scope>
    <source>
        <tissue>Kidney</tissue>
    </source>
</reference>
<organism>
    <name type="scientific">Homo sapiens</name>
    <name type="common">Human</name>
    <dbReference type="NCBI Taxonomy" id="9606"/>
    <lineage>
        <taxon>Eukaryota</taxon>
        <taxon>Metazoa</taxon>
        <taxon>Chordata</taxon>
        <taxon>Craniata</taxon>
        <taxon>Vertebrata</taxon>
        <taxon>Euteleostomi</taxon>
        <taxon>Mammalia</taxon>
        <taxon>Eutheria</taxon>
        <taxon>Euarchontoglires</taxon>
        <taxon>Primates</taxon>
        <taxon>Haplorrhini</taxon>
        <taxon>Catarrhini</taxon>
        <taxon>Hominidae</taxon>
        <taxon>Homo</taxon>
    </lineage>
</organism>
<keyword id="KW-0472">Membrane</keyword>
<keyword id="KW-1185">Reference proteome</keyword>
<keyword id="KW-0812">Transmembrane</keyword>
<keyword id="KW-1133">Transmembrane helix</keyword>
<evidence type="ECO:0000255" key="1"/>
<evidence type="ECO:0000305" key="2"/>
<dbReference type="EMBL" id="AK313400">
    <property type="protein sequence ID" value="BAG36197.1"/>
    <property type="molecule type" value="mRNA"/>
</dbReference>
<dbReference type="EMBL" id="CH471052">
    <property type="protein sequence ID" value="EAW78877.1"/>
    <property type="molecule type" value="Genomic_DNA"/>
</dbReference>
<dbReference type="EMBL" id="CH471052">
    <property type="protein sequence ID" value="EAW78878.1"/>
    <property type="molecule type" value="Genomic_DNA"/>
</dbReference>
<dbReference type="EMBL" id="CH471052">
    <property type="protein sequence ID" value="EAW78879.1"/>
    <property type="molecule type" value="Genomic_DNA"/>
</dbReference>
<dbReference type="EMBL" id="BC014339">
    <property type="protein sequence ID" value="AAH14339.1"/>
    <property type="molecule type" value="mRNA"/>
</dbReference>
<dbReference type="CCDS" id="CCDS3142.1"/>
<dbReference type="RefSeq" id="NP_001171652.1">
    <property type="nucleotide sequence ID" value="NM_001184723.2"/>
</dbReference>
<dbReference type="RefSeq" id="NP_620141.1">
    <property type="nucleotide sequence ID" value="NM_138786.4"/>
</dbReference>
<dbReference type="SMR" id="Q96CE8"/>
<dbReference type="BioGRID" id="125506">
    <property type="interactions" value="51"/>
</dbReference>
<dbReference type="FunCoup" id="Q96CE8">
    <property type="interactions" value="24"/>
</dbReference>
<dbReference type="IntAct" id="Q96CE8">
    <property type="interactions" value="48"/>
</dbReference>
<dbReference type="STRING" id="9606.ENSP00000296059"/>
<dbReference type="TCDB" id="8.A.75.1.2">
    <property type="family name" value="the transmembrane 4 l6 (tm4l6) family"/>
</dbReference>
<dbReference type="iPTMnet" id="Q96CE8"/>
<dbReference type="PhosphoSitePlus" id="Q96CE8"/>
<dbReference type="BioMuta" id="TM4SF18"/>
<dbReference type="DMDM" id="68053312"/>
<dbReference type="jPOST" id="Q96CE8"/>
<dbReference type="MassIVE" id="Q96CE8"/>
<dbReference type="PaxDb" id="9606-ENSP00000296059"/>
<dbReference type="PeptideAtlas" id="Q96CE8"/>
<dbReference type="ProteomicsDB" id="76182"/>
<dbReference type="Antibodypedia" id="67990">
    <property type="antibodies" value="97 antibodies from 18 providers"/>
</dbReference>
<dbReference type="DNASU" id="116441"/>
<dbReference type="Ensembl" id="ENST00000296059.7">
    <property type="protein sequence ID" value="ENSP00000296059.2"/>
    <property type="gene ID" value="ENSG00000163762.7"/>
</dbReference>
<dbReference type="Ensembl" id="ENST00000470080.5">
    <property type="protein sequence ID" value="ENSP00000419278.1"/>
    <property type="gene ID" value="ENSG00000163762.7"/>
</dbReference>
<dbReference type="GeneID" id="116441"/>
<dbReference type="KEGG" id="hsa:116441"/>
<dbReference type="MANE-Select" id="ENST00000296059.7">
    <property type="protein sequence ID" value="ENSP00000296059.2"/>
    <property type="RefSeq nucleotide sequence ID" value="NM_138786.4"/>
    <property type="RefSeq protein sequence ID" value="NP_620141.1"/>
</dbReference>
<dbReference type="UCSC" id="uc003exa.3">
    <property type="organism name" value="human"/>
</dbReference>
<dbReference type="AGR" id="HGNC:25181"/>
<dbReference type="CTD" id="116441"/>
<dbReference type="DisGeNET" id="116441"/>
<dbReference type="GeneCards" id="TM4SF18"/>
<dbReference type="HGNC" id="HGNC:25181">
    <property type="gene designation" value="TM4SF18"/>
</dbReference>
<dbReference type="HPA" id="ENSG00000163762">
    <property type="expression patterns" value="Tissue enhanced (lymphoid)"/>
</dbReference>
<dbReference type="neXtProt" id="NX_Q96CE8"/>
<dbReference type="OpenTargets" id="ENSG00000163762"/>
<dbReference type="PharmGKB" id="PA142670801"/>
<dbReference type="VEuPathDB" id="HostDB:ENSG00000163762"/>
<dbReference type="eggNOG" id="ENOG502QS18">
    <property type="taxonomic scope" value="Eukaryota"/>
</dbReference>
<dbReference type="GeneTree" id="ENSGT01030000234590"/>
<dbReference type="InParanoid" id="Q96CE8"/>
<dbReference type="OMA" id="WDYIFKD"/>
<dbReference type="OrthoDB" id="8697884at2759"/>
<dbReference type="PAN-GO" id="Q96CE8">
    <property type="GO annotations" value="1 GO annotation based on evolutionary models"/>
</dbReference>
<dbReference type="PhylomeDB" id="Q96CE8"/>
<dbReference type="TreeFam" id="TF331371"/>
<dbReference type="PathwayCommons" id="Q96CE8"/>
<dbReference type="SignaLink" id="Q96CE8"/>
<dbReference type="BioGRID-ORCS" id="116441">
    <property type="hits" value="9 hits in 1137 CRISPR screens"/>
</dbReference>
<dbReference type="ChiTaRS" id="TM4SF18">
    <property type="organism name" value="human"/>
</dbReference>
<dbReference type="GenomeRNAi" id="116441"/>
<dbReference type="Pharos" id="Q96CE8">
    <property type="development level" value="Tbio"/>
</dbReference>
<dbReference type="PRO" id="PR:Q96CE8"/>
<dbReference type="Proteomes" id="UP000005640">
    <property type="component" value="Chromosome 3"/>
</dbReference>
<dbReference type="RNAct" id="Q96CE8">
    <property type="molecule type" value="protein"/>
</dbReference>
<dbReference type="Bgee" id="ENSG00000163762">
    <property type="expression patterns" value="Expressed in visceral pleura and 158 other cell types or tissues"/>
</dbReference>
<dbReference type="ExpressionAtlas" id="Q96CE8">
    <property type="expression patterns" value="baseline and differential"/>
</dbReference>
<dbReference type="GO" id="GO:0016020">
    <property type="term" value="C:membrane"/>
    <property type="evidence" value="ECO:0000318"/>
    <property type="project" value="GO_Central"/>
</dbReference>
<dbReference type="InterPro" id="IPR008661">
    <property type="entry name" value="L6_membrane"/>
</dbReference>
<dbReference type="PANTHER" id="PTHR14198">
    <property type="entry name" value="TRANSMEMBRANE 4 L6 FAMILY MEMBER 1-RELATED"/>
    <property type="match status" value="1"/>
</dbReference>
<dbReference type="PANTHER" id="PTHR14198:SF14">
    <property type="entry name" value="TRANSMEMBRANE 4 L6 FAMILY MEMBER 18"/>
    <property type="match status" value="1"/>
</dbReference>
<dbReference type="Pfam" id="PF05805">
    <property type="entry name" value="L6_membrane"/>
    <property type="match status" value="1"/>
</dbReference>
<protein>
    <recommendedName>
        <fullName>Transmembrane 4 L6 family member 18</fullName>
    </recommendedName>
</protein>
<name>T4S18_HUMAN</name>